<dbReference type="EMBL" id="CP000116">
    <property type="protein sequence ID" value="AAZ96063.1"/>
    <property type="molecule type" value="Genomic_DNA"/>
</dbReference>
<dbReference type="RefSeq" id="WP_011310623.1">
    <property type="nucleotide sequence ID" value="NC_007404.1"/>
</dbReference>
<dbReference type="SMR" id="Q3SMI2"/>
<dbReference type="STRING" id="292415.Tbd_0110"/>
<dbReference type="KEGG" id="tbd:Tbd_0110"/>
<dbReference type="eggNOG" id="COG2001">
    <property type="taxonomic scope" value="Bacteria"/>
</dbReference>
<dbReference type="HOGENOM" id="CLU_107907_2_0_4"/>
<dbReference type="OrthoDB" id="9807753at2"/>
<dbReference type="Proteomes" id="UP000008291">
    <property type="component" value="Chromosome"/>
</dbReference>
<dbReference type="GO" id="GO:0005737">
    <property type="term" value="C:cytoplasm"/>
    <property type="evidence" value="ECO:0007669"/>
    <property type="project" value="UniProtKB-UniRule"/>
</dbReference>
<dbReference type="GO" id="GO:0009295">
    <property type="term" value="C:nucleoid"/>
    <property type="evidence" value="ECO:0007669"/>
    <property type="project" value="UniProtKB-SubCell"/>
</dbReference>
<dbReference type="GO" id="GO:0003700">
    <property type="term" value="F:DNA-binding transcription factor activity"/>
    <property type="evidence" value="ECO:0007669"/>
    <property type="project" value="UniProtKB-UniRule"/>
</dbReference>
<dbReference type="GO" id="GO:0000976">
    <property type="term" value="F:transcription cis-regulatory region binding"/>
    <property type="evidence" value="ECO:0007669"/>
    <property type="project" value="TreeGrafter"/>
</dbReference>
<dbReference type="GO" id="GO:2000143">
    <property type="term" value="P:negative regulation of DNA-templated transcription initiation"/>
    <property type="evidence" value="ECO:0007669"/>
    <property type="project" value="TreeGrafter"/>
</dbReference>
<dbReference type="CDD" id="cd16321">
    <property type="entry name" value="MraZ_C"/>
    <property type="match status" value="1"/>
</dbReference>
<dbReference type="CDD" id="cd16320">
    <property type="entry name" value="MraZ_N"/>
    <property type="match status" value="1"/>
</dbReference>
<dbReference type="Gene3D" id="3.40.1550.20">
    <property type="entry name" value="Transcriptional regulator MraZ domain"/>
    <property type="match status" value="1"/>
</dbReference>
<dbReference type="HAMAP" id="MF_01008">
    <property type="entry name" value="MraZ"/>
    <property type="match status" value="1"/>
</dbReference>
<dbReference type="InterPro" id="IPR003444">
    <property type="entry name" value="MraZ"/>
</dbReference>
<dbReference type="InterPro" id="IPR035644">
    <property type="entry name" value="MraZ_C"/>
</dbReference>
<dbReference type="InterPro" id="IPR020603">
    <property type="entry name" value="MraZ_dom"/>
</dbReference>
<dbReference type="InterPro" id="IPR035642">
    <property type="entry name" value="MraZ_N"/>
</dbReference>
<dbReference type="InterPro" id="IPR038619">
    <property type="entry name" value="MraZ_sf"/>
</dbReference>
<dbReference type="InterPro" id="IPR007159">
    <property type="entry name" value="SpoVT-AbrB_dom"/>
</dbReference>
<dbReference type="InterPro" id="IPR037914">
    <property type="entry name" value="SpoVT-AbrB_sf"/>
</dbReference>
<dbReference type="NCBIfam" id="TIGR00242">
    <property type="entry name" value="division/cell wall cluster transcriptional repressor MraZ"/>
    <property type="match status" value="1"/>
</dbReference>
<dbReference type="PANTHER" id="PTHR34701">
    <property type="entry name" value="TRANSCRIPTIONAL REGULATOR MRAZ"/>
    <property type="match status" value="1"/>
</dbReference>
<dbReference type="PANTHER" id="PTHR34701:SF1">
    <property type="entry name" value="TRANSCRIPTIONAL REGULATOR MRAZ"/>
    <property type="match status" value="1"/>
</dbReference>
<dbReference type="Pfam" id="PF02381">
    <property type="entry name" value="MraZ"/>
    <property type="match status" value="2"/>
</dbReference>
<dbReference type="SUPFAM" id="SSF89447">
    <property type="entry name" value="AbrB/MazE/MraZ-like"/>
    <property type="match status" value="1"/>
</dbReference>
<dbReference type="PROSITE" id="PS51740">
    <property type="entry name" value="SPOVT_ABRB"/>
    <property type="match status" value="2"/>
</dbReference>
<name>MRAZ_THIDA</name>
<protein>
    <recommendedName>
        <fullName>Transcriptional regulator MraZ</fullName>
    </recommendedName>
</protein>
<organism>
    <name type="scientific">Thiobacillus denitrificans (strain ATCC 25259 / T1)</name>
    <dbReference type="NCBI Taxonomy" id="292415"/>
    <lineage>
        <taxon>Bacteria</taxon>
        <taxon>Pseudomonadati</taxon>
        <taxon>Pseudomonadota</taxon>
        <taxon>Betaproteobacteria</taxon>
        <taxon>Nitrosomonadales</taxon>
        <taxon>Thiobacillaceae</taxon>
        <taxon>Thiobacillus</taxon>
    </lineage>
</organism>
<comment type="subunit">
    <text evidence="1">Forms oligomers.</text>
</comment>
<comment type="subcellular location">
    <subcellularLocation>
        <location evidence="1">Cytoplasm</location>
        <location evidence="1">Nucleoid</location>
    </subcellularLocation>
</comment>
<comment type="similarity">
    <text evidence="1">Belongs to the MraZ family.</text>
</comment>
<reference key="1">
    <citation type="journal article" date="2006" name="J. Bacteriol.">
        <title>The genome sequence of the obligately chemolithoautotrophic, facultatively anaerobic bacterium Thiobacillus denitrificans.</title>
        <authorList>
            <person name="Beller H.R."/>
            <person name="Chain P.S."/>
            <person name="Letain T.E."/>
            <person name="Chakicherla A."/>
            <person name="Larimer F.W."/>
            <person name="Richardson P.M."/>
            <person name="Coleman M.A."/>
            <person name="Wood A.P."/>
            <person name="Kelly D.P."/>
        </authorList>
    </citation>
    <scope>NUCLEOTIDE SEQUENCE [LARGE SCALE GENOMIC DNA]</scope>
    <source>
        <strain>ATCC 25259 / T1</strain>
    </source>
</reference>
<sequence length="148" mass="16434">MFRGVATVSLDSKNRLVVPARYRDALLVNGAGRVVVTADPGQCLLLYPLPEWEPIEKKLTALSDFNPRTRSLKQLLVGYAHDIDMDSAGRVLLPPMLRKFAELDKNVVLVGQGSKVELWNEARWEAQVAQALSFSQEALPSELEGFTL</sequence>
<accession>Q3SMI2</accession>
<proteinExistence type="inferred from homology"/>
<keyword id="KW-0963">Cytoplasm</keyword>
<keyword id="KW-0238">DNA-binding</keyword>
<keyword id="KW-1185">Reference proteome</keyword>
<keyword id="KW-0677">Repeat</keyword>
<keyword id="KW-0804">Transcription</keyword>
<keyword id="KW-0805">Transcription regulation</keyword>
<evidence type="ECO:0000255" key="1">
    <source>
        <dbReference type="HAMAP-Rule" id="MF_01008"/>
    </source>
</evidence>
<evidence type="ECO:0000255" key="2">
    <source>
        <dbReference type="PROSITE-ProRule" id="PRU01076"/>
    </source>
</evidence>
<feature type="chain" id="PRO_0000230115" description="Transcriptional regulator MraZ">
    <location>
        <begin position="1"/>
        <end position="148"/>
    </location>
</feature>
<feature type="domain" description="SpoVT-AbrB 1" evidence="2">
    <location>
        <begin position="5"/>
        <end position="51"/>
    </location>
</feature>
<feature type="domain" description="SpoVT-AbrB 2" evidence="2">
    <location>
        <begin position="80"/>
        <end position="123"/>
    </location>
</feature>
<gene>
    <name evidence="1" type="primary">mraZ</name>
    <name type="ordered locus">Tbd_0110</name>
</gene>